<protein>
    <recommendedName>
        <fullName evidence="1">Ion-translocating oxidoreductase complex subunit D</fullName>
        <ecNumber evidence="1">7.-.-.-</ecNumber>
    </recommendedName>
    <alternativeName>
        <fullName evidence="1">Rnf electron transport complex subunit D</fullName>
    </alternativeName>
</protein>
<dbReference type="EC" id="7.-.-.-" evidence="1"/>
<dbReference type="EMBL" id="CP001657">
    <property type="protein sequence ID" value="ACT13063.1"/>
    <property type="molecule type" value="Genomic_DNA"/>
</dbReference>
<dbReference type="SMR" id="C6DH14"/>
<dbReference type="STRING" id="561230.PC1_2022"/>
<dbReference type="KEGG" id="pct:PC1_2022"/>
<dbReference type="eggNOG" id="COG4658">
    <property type="taxonomic scope" value="Bacteria"/>
</dbReference>
<dbReference type="HOGENOM" id="CLU_042020_0_0_6"/>
<dbReference type="OrthoDB" id="9776359at2"/>
<dbReference type="Proteomes" id="UP000002736">
    <property type="component" value="Chromosome"/>
</dbReference>
<dbReference type="GO" id="GO:0005886">
    <property type="term" value="C:plasma membrane"/>
    <property type="evidence" value="ECO:0007669"/>
    <property type="project" value="UniProtKB-SubCell"/>
</dbReference>
<dbReference type="GO" id="GO:0022900">
    <property type="term" value="P:electron transport chain"/>
    <property type="evidence" value="ECO:0007669"/>
    <property type="project" value="UniProtKB-UniRule"/>
</dbReference>
<dbReference type="GO" id="GO:0055085">
    <property type="term" value="P:transmembrane transport"/>
    <property type="evidence" value="ECO:0007669"/>
    <property type="project" value="InterPro"/>
</dbReference>
<dbReference type="HAMAP" id="MF_00462">
    <property type="entry name" value="RsxD_RnfD"/>
    <property type="match status" value="1"/>
</dbReference>
<dbReference type="InterPro" id="IPR004338">
    <property type="entry name" value="NqrB/RnfD"/>
</dbReference>
<dbReference type="InterPro" id="IPR011303">
    <property type="entry name" value="RnfD_bac"/>
</dbReference>
<dbReference type="NCBIfam" id="NF002011">
    <property type="entry name" value="PRK00816.1"/>
    <property type="match status" value="1"/>
</dbReference>
<dbReference type="NCBIfam" id="TIGR01946">
    <property type="entry name" value="rnfD"/>
    <property type="match status" value="1"/>
</dbReference>
<dbReference type="PANTHER" id="PTHR30578">
    <property type="entry name" value="ELECTRON TRANSPORT COMPLEX PROTEIN RNFD"/>
    <property type="match status" value="1"/>
</dbReference>
<dbReference type="PANTHER" id="PTHR30578:SF0">
    <property type="entry name" value="ION-TRANSLOCATING OXIDOREDUCTASE COMPLEX SUBUNIT D"/>
    <property type="match status" value="1"/>
</dbReference>
<dbReference type="Pfam" id="PF03116">
    <property type="entry name" value="NQR2_RnfD_RnfE"/>
    <property type="match status" value="1"/>
</dbReference>
<organism>
    <name type="scientific">Pectobacterium carotovorum subsp. carotovorum (strain PC1)</name>
    <dbReference type="NCBI Taxonomy" id="561230"/>
    <lineage>
        <taxon>Bacteria</taxon>
        <taxon>Pseudomonadati</taxon>
        <taxon>Pseudomonadota</taxon>
        <taxon>Gammaproteobacteria</taxon>
        <taxon>Enterobacterales</taxon>
        <taxon>Pectobacteriaceae</taxon>
        <taxon>Pectobacterium</taxon>
    </lineage>
</organism>
<proteinExistence type="inferred from homology"/>
<feature type="chain" id="PRO_1000206296" description="Ion-translocating oxidoreductase complex subunit D">
    <location>
        <begin position="1"/>
        <end position="351"/>
    </location>
</feature>
<feature type="transmembrane region" description="Helical" evidence="1">
    <location>
        <begin position="20"/>
        <end position="40"/>
    </location>
</feature>
<feature type="transmembrane region" description="Helical" evidence="1">
    <location>
        <begin position="44"/>
        <end position="64"/>
    </location>
</feature>
<feature type="transmembrane region" description="Helical" evidence="1">
    <location>
        <begin position="89"/>
        <end position="109"/>
    </location>
</feature>
<feature type="transmembrane region" description="Helical" evidence="1">
    <location>
        <begin position="123"/>
        <end position="143"/>
    </location>
</feature>
<feature type="transmembrane region" description="Helical" evidence="1">
    <location>
        <begin position="215"/>
        <end position="235"/>
    </location>
</feature>
<feature type="transmembrane region" description="Helical" evidence="1">
    <location>
        <begin position="244"/>
        <end position="264"/>
    </location>
</feature>
<feature type="transmembrane region" description="Helical" evidence="1">
    <location>
        <begin position="267"/>
        <end position="287"/>
    </location>
</feature>
<feature type="transmembrane region" description="Helical" evidence="1">
    <location>
        <begin position="301"/>
        <end position="321"/>
    </location>
</feature>
<feature type="transmembrane region" description="Helical" evidence="1">
    <location>
        <begin position="322"/>
        <end position="342"/>
    </location>
</feature>
<feature type="modified residue" description="FMN phosphoryl threonine" evidence="1">
    <location>
        <position position="187"/>
    </location>
</feature>
<reference key="1">
    <citation type="submission" date="2009-07" db="EMBL/GenBank/DDBJ databases">
        <title>Complete sequence of Pectobacterium carotovorum subsp. carotovorum PC1.</title>
        <authorList>
            <consortium name="US DOE Joint Genome Institute"/>
            <person name="Lucas S."/>
            <person name="Copeland A."/>
            <person name="Lapidus A."/>
            <person name="Glavina del Rio T."/>
            <person name="Tice H."/>
            <person name="Bruce D."/>
            <person name="Goodwin L."/>
            <person name="Pitluck S."/>
            <person name="Munk A.C."/>
            <person name="Brettin T."/>
            <person name="Detter J.C."/>
            <person name="Han C."/>
            <person name="Tapia R."/>
            <person name="Larimer F."/>
            <person name="Land M."/>
            <person name="Hauser L."/>
            <person name="Kyrpides N."/>
            <person name="Mikhailova N."/>
            <person name="Balakrishnan V."/>
            <person name="Glasner J."/>
            <person name="Perna N.T."/>
        </authorList>
    </citation>
    <scope>NUCLEOTIDE SEQUENCE [LARGE SCALE GENOMIC DNA]</scope>
    <source>
        <strain>PC1</strain>
    </source>
</reference>
<name>RNFD_PECCP</name>
<sequence length="351" mass="38353">MAFRIASSPFTHNQQRTQRIMLLVILACLPGMLAQVYFFGYGNLIQVGLASATALIAEGVTLSLRKFAVRTTLADNSALLTAVLLGISLPPLAPWWMVVMATVFAIIIAKQLYGGLGQNPFNPAMIGYVVLLISFPVQMTSWLPPVPLQTIPVGFHDALVIIFTGHTPDGYTMQQLMHNVDGISQATPLDTFKTSLRSGQTPQSILQQPMFAQSLSGIGWQWVNIGFLIGGLFLLMRGTIRWHIPVSFLLSLMFCASLSWVIAPEKFAPPMLHLLSGATMLGAFFIATDPVTASTTNRGRLIFGALIGLLVWLIRTYGGYPDGVAFAVLLANITVPLIDYYTKPRAYGHRR</sequence>
<evidence type="ECO:0000255" key="1">
    <source>
        <dbReference type="HAMAP-Rule" id="MF_00462"/>
    </source>
</evidence>
<keyword id="KW-0997">Cell inner membrane</keyword>
<keyword id="KW-1003">Cell membrane</keyword>
<keyword id="KW-0249">Electron transport</keyword>
<keyword id="KW-0285">Flavoprotein</keyword>
<keyword id="KW-0288">FMN</keyword>
<keyword id="KW-0472">Membrane</keyword>
<keyword id="KW-0597">Phosphoprotein</keyword>
<keyword id="KW-1278">Translocase</keyword>
<keyword id="KW-0812">Transmembrane</keyword>
<keyword id="KW-1133">Transmembrane helix</keyword>
<keyword id="KW-0813">Transport</keyword>
<gene>
    <name evidence="1" type="primary">rnfD</name>
    <name type="ordered locus">PC1_2022</name>
</gene>
<comment type="function">
    <text evidence="1">Part of a membrane-bound complex that couples electron transfer with translocation of ions across the membrane.</text>
</comment>
<comment type="cofactor">
    <cofactor evidence="1">
        <name>FMN</name>
        <dbReference type="ChEBI" id="CHEBI:58210"/>
    </cofactor>
</comment>
<comment type="subunit">
    <text evidence="1">The complex is composed of six subunits: RnfA, RnfB, RnfC, RnfD, RnfE and RnfG.</text>
</comment>
<comment type="subcellular location">
    <subcellularLocation>
        <location evidence="1">Cell inner membrane</location>
        <topology evidence="1">Multi-pass membrane protein</topology>
    </subcellularLocation>
</comment>
<comment type="similarity">
    <text evidence="1">Belongs to the NqrB/RnfD family.</text>
</comment>
<accession>C6DH14</accession>